<feature type="chain" id="PRO_0000069534" description="G-protein coupled receptor 15">
    <location>
        <begin position="1"/>
        <end position="360"/>
    </location>
</feature>
<feature type="topological domain" description="Extracellular" evidence="3">
    <location>
        <begin position="1"/>
        <end position="33"/>
    </location>
</feature>
<feature type="transmembrane region" description="Helical; Name=1" evidence="3">
    <location>
        <begin position="34"/>
        <end position="54"/>
    </location>
</feature>
<feature type="topological domain" description="Cytoplasmic" evidence="3">
    <location>
        <begin position="55"/>
        <end position="69"/>
    </location>
</feature>
<feature type="transmembrane region" description="Helical; Name=2" evidence="3">
    <location>
        <begin position="70"/>
        <end position="90"/>
    </location>
</feature>
<feature type="topological domain" description="Extracellular" evidence="3">
    <location>
        <begin position="91"/>
        <end position="120"/>
    </location>
</feature>
<feature type="transmembrane region" description="Helical; Name=3" evidence="3">
    <location>
        <begin position="121"/>
        <end position="141"/>
    </location>
</feature>
<feature type="topological domain" description="Cytoplasmic" evidence="3">
    <location>
        <begin position="142"/>
        <end position="149"/>
    </location>
</feature>
<feature type="transmembrane region" description="Helical; Name=4" evidence="3">
    <location>
        <begin position="150"/>
        <end position="170"/>
    </location>
</feature>
<feature type="topological domain" description="Extracellular" evidence="3">
    <location>
        <begin position="171"/>
        <end position="192"/>
    </location>
</feature>
<feature type="transmembrane region" description="Helical; Name=5" evidence="3">
    <location>
        <begin position="193"/>
        <end position="213"/>
    </location>
</feature>
<feature type="topological domain" description="Cytoplasmic" evidence="3">
    <location>
        <begin position="214"/>
        <end position="239"/>
    </location>
</feature>
<feature type="transmembrane region" description="Helical; Name=6" evidence="3">
    <location>
        <begin position="240"/>
        <end position="260"/>
    </location>
</feature>
<feature type="topological domain" description="Extracellular" evidence="3">
    <location>
        <begin position="261"/>
        <end position="284"/>
    </location>
</feature>
<feature type="transmembrane region" description="Helical; Name=7" evidence="3">
    <location>
        <begin position="285"/>
        <end position="305"/>
    </location>
</feature>
<feature type="topological domain" description="Cytoplasmic" evidence="3">
    <location>
        <begin position="306"/>
        <end position="360"/>
    </location>
</feature>
<feature type="modified residue" description="Phosphoserine" evidence="1">
    <location>
        <position position="359"/>
    </location>
</feature>
<name>GPR15_MACNE</name>
<dbReference type="EMBL" id="AF007857">
    <property type="protein sequence ID" value="AAB64223.1"/>
    <property type="molecule type" value="Genomic_DNA"/>
</dbReference>
<dbReference type="SMR" id="P56412"/>
<dbReference type="STRING" id="9545.ENSMNEP00000001468"/>
<dbReference type="Proteomes" id="UP000233120">
    <property type="component" value="Unassembled WGS sequence"/>
</dbReference>
<dbReference type="GO" id="GO:0009897">
    <property type="term" value="C:external side of plasma membrane"/>
    <property type="evidence" value="ECO:0007669"/>
    <property type="project" value="TreeGrafter"/>
</dbReference>
<dbReference type="GO" id="GO:0005886">
    <property type="term" value="C:plasma membrane"/>
    <property type="evidence" value="ECO:0000250"/>
    <property type="project" value="UniProtKB"/>
</dbReference>
<dbReference type="GO" id="GO:0019957">
    <property type="term" value="F:C-C chemokine binding"/>
    <property type="evidence" value="ECO:0007669"/>
    <property type="project" value="TreeGrafter"/>
</dbReference>
<dbReference type="GO" id="GO:0016493">
    <property type="term" value="F:C-C chemokine receptor activity"/>
    <property type="evidence" value="ECO:0007669"/>
    <property type="project" value="TreeGrafter"/>
</dbReference>
<dbReference type="GO" id="GO:0001525">
    <property type="term" value="P:angiogenesis"/>
    <property type="evidence" value="ECO:0000250"/>
    <property type="project" value="UniProtKB"/>
</dbReference>
<dbReference type="GO" id="GO:0019722">
    <property type="term" value="P:calcium-mediated signaling"/>
    <property type="evidence" value="ECO:0007669"/>
    <property type="project" value="TreeGrafter"/>
</dbReference>
<dbReference type="GO" id="GO:0060326">
    <property type="term" value="P:cell chemotaxis"/>
    <property type="evidence" value="ECO:0007669"/>
    <property type="project" value="TreeGrafter"/>
</dbReference>
<dbReference type="GO" id="GO:0007186">
    <property type="term" value="P:G protein-coupled receptor signaling pathway"/>
    <property type="evidence" value="ECO:0000250"/>
    <property type="project" value="UniProtKB"/>
</dbReference>
<dbReference type="GO" id="GO:0006955">
    <property type="term" value="P:immune response"/>
    <property type="evidence" value="ECO:0007669"/>
    <property type="project" value="TreeGrafter"/>
</dbReference>
<dbReference type="GO" id="GO:0007204">
    <property type="term" value="P:positive regulation of cytosolic calcium ion concentration"/>
    <property type="evidence" value="ECO:0007669"/>
    <property type="project" value="TreeGrafter"/>
</dbReference>
<dbReference type="FunFam" id="1.20.1070.10:FF:000187">
    <property type="entry name" value="G-protein coupled receptor 15"/>
    <property type="match status" value="1"/>
</dbReference>
<dbReference type="Gene3D" id="1.20.1070.10">
    <property type="entry name" value="Rhodopsin 7-helix transmembrane proteins"/>
    <property type="match status" value="1"/>
</dbReference>
<dbReference type="InterPro" id="IPR050119">
    <property type="entry name" value="CCR1-9-like"/>
</dbReference>
<dbReference type="InterPro" id="IPR000276">
    <property type="entry name" value="GPCR_Rhodpsn"/>
</dbReference>
<dbReference type="InterPro" id="IPR017452">
    <property type="entry name" value="GPCR_Rhodpsn_7TM"/>
</dbReference>
<dbReference type="PANTHER" id="PTHR10489">
    <property type="entry name" value="CELL ADHESION MOLECULE"/>
    <property type="match status" value="1"/>
</dbReference>
<dbReference type="PANTHER" id="PTHR10489:SF954">
    <property type="entry name" value="G PROTEIN-COUPLED RECEPTOR 25"/>
    <property type="match status" value="1"/>
</dbReference>
<dbReference type="Pfam" id="PF00001">
    <property type="entry name" value="7tm_1"/>
    <property type="match status" value="1"/>
</dbReference>
<dbReference type="PRINTS" id="PR00237">
    <property type="entry name" value="GPCRRHODOPSN"/>
</dbReference>
<dbReference type="PRINTS" id="PR01157">
    <property type="entry name" value="P2YPURNOCPTR"/>
</dbReference>
<dbReference type="SMART" id="SM01381">
    <property type="entry name" value="7TM_GPCR_Srsx"/>
    <property type="match status" value="1"/>
</dbReference>
<dbReference type="SUPFAM" id="SSF81321">
    <property type="entry name" value="Family A G protein-coupled receptor-like"/>
    <property type="match status" value="1"/>
</dbReference>
<dbReference type="PROSITE" id="PS00237">
    <property type="entry name" value="G_PROTEIN_RECEP_F1_1"/>
    <property type="match status" value="1"/>
</dbReference>
<dbReference type="PROSITE" id="PS50262">
    <property type="entry name" value="G_PROTEIN_RECEP_F1_2"/>
    <property type="match status" value="1"/>
</dbReference>
<keyword id="KW-1003">Cell membrane</keyword>
<keyword id="KW-0297">G-protein coupled receptor</keyword>
<keyword id="KW-0472">Membrane</keyword>
<keyword id="KW-0597">Phosphoprotein</keyword>
<keyword id="KW-0675">Receptor</keyword>
<keyword id="KW-1185">Reference proteome</keyword>
<keyword id="KW-0807">Transducer</keyword>
<keyword id="KW-0812">Transmembrane</keyword>
<keyword id="KW-1133">Transmembrane helix</keyword>
<reference key="1">
    <citation type="journal article" date="1997" name="Nature">
        <title>Expression cloning of new receptors used by simian and human immunodeficiency viruses.</title>
        <authorList>
            <person name="Deng H.K."/>
            <person name="Unutmaz D."/>
            <person name="Kewalramani V.N."/>
            <person name="Littman D.R."/>
        </authorList>
    </citation>
    <scope>NUCLEOTIDE SEQUENCE [GENOMIC DNA]</scope>
</reference>
<protein>
    <recommendedName>
        <fullName>G-protein coupled receptor 15</fullName>
    </recommendedName>
</protein>
<proteinExistence type="inferred from homology"/>
<accession>P56412</accession>
<comment type="function">
    <text evidence="1 2">G protein-coupled receptor that plays an important role in immune homeostasis. Acts via its natural ligand GPR15LG, a chemokine-like polypeptide strongly expressed in gastrointestinal tissues. GPR15-GPR15LG signaling axis regulates intestinal homeostasis and inflammation through the migration of immune cells (By similarity). Controls thereby the specific homing of T-cells, particularly FOXP3+ regulatory T-cells (Tregs), to the large intestine lamina propria (By similarity). Also required for skin localization of thymus-derived dendritic epidermal T-cells (By similarity). Plays an important role in mediating cytoprotective function as well as angiogenesis of thrombomodulin (By similarity). Mechanistically, preferentially signals through the Gi/o pathway to inhibit adenylate cyclase activity and activate a phosphatidylinositol-calcium second messenger system that regulates the release of Ca(2+) ions from intracellular stores (By similarity).</text>
</comment>
<comment type="subunit">
    <text evidence="1">Interacts with adapter YWHAE; this interaction promotes ER-to-Golgi transport of GPR15.</text>
</comment>
<comment type="subcellular location">
    <subcellularLocation>
        <location evidence="1">Cell membrane</location>
        <topology evidence="1">Multi-pass membrane protein</topology>
    </subcellularLocation>
</comment>
<comment type="PTM">
    <text evidence="1">Phosphorylation is necessary for YWHAE binding and efficient surface expression.</text>
</comment>
<comment type="PTM">
    <text evidence="1">O-glycosylated. Sialylated O-glycans in the N-terminal tail inhibits binding of GPR15LG.</text>
</comment>
<comment type="PTM">
    <text evidence="1">Sulfation is required for efficient binding of GPR15LG.</text>
</comment>
<comment type="similarity">
    <text evidence="4">Belongs to the G-protein coupled receptor 1 family.</text>
</comment>
<gene>
    <name type="primary">GPR15</name>
</gene>
<evidence type="ECO:0000250" key="1">
    <source>
        <dbReference type="UniProtKB" id="P49685"/>
    </source>
</evidence>
<evidence type="ECO:0000250" key="2">
    <source>
        <dbReference type="UniProtKB" id="Q0VDU3"/>
    </source>
</evidence>
<evidence type="ECO:0000255" key="3"/>
<evidence type="ECO:0000255" key="4">
    <source>
        <dbReference type="PROSITE-ProRule" id="PRU00521"/>
    </source>
</evidence>
<organism>
    <name type="scientific">Macaca nemestrina</name>
    <name type="common">Pig-tailed macaque</name>
    <dbReference type="NCBI Taxonomy" id="9545"/>
    <lineage>
        <taxon>Eukaryota</taxon>
        <taxon>Metazoa</taxon>
        <taxon>Chordata</taxon>
        <taxon>Craniata</taxon>
        <taxon>Vertebrata</taxon>
        <taxon>Euteleostomi</taxon>
        <taxon>Mammalia</taxon>
        <taxon>Eutheria</taxon>
        <taxon>Euarchontoglires</taxon>
        <taxon>Primates</taxon>
        <taxon>Haplorrhini</taxon>
        <taxon>Catarrhini</taxon>
        <taxon>Cercopithecidae</taxon>
        <taxon>Cercopithecinae</taxon>
        <taxon>Macaca</taxon>
    </lineage>
</organism>
<sequence>MDPEETSVYLDYYYATSPNPDIRETHSHVPYTSVFLPVFYTAVFLTGVLGNLVLMGALHFKPGSRRLIDIFIINLAASDFIFLVTLPLWVDKEASLGLWRTGSFLCKGSSYMISVNMHCSVFLLTCMSVDRYLAIVCPVVSRKFRRTDCAYVVCASIWFISCLLGLPTLLSRELTLIDDKPYCAEKKATPLKLIWSLVALIFTFFVPLLSIVTCYCCIARKLCAHYQQSGKHNKKLKKSIKIIFIVVAAFLVSWLPFNTSKLLAIVSGLQQERYFPSAILQLGMEVSGPLAFANSCVNPFIYYIFDSYIRRAIVHCLCPCLKNYDFGSSTETSDSHLTKALSTFIHAEDFTRRRKRSVSL</sequence>